<evidence type="ECO:0000250" key="1"/>
<evidence type="ECO:0000269" key="2">
    <source>
    </source>
</evidence>
<evidence type="ECO:0000305" key="3"/>
<accession>Q08CH6</accession>
<sequence>MEESELTQNETEELKASVSAVEFIHIAQRDLEQCLFADSLVTVSDSGRELGDFSVSVTKASYNEELCYLLHANSHGTIDDVPCGTSIVAYISRKLEILEENHHEYVKLEKKTVDRKIHIVRQDDQLVVDRVISEREGVKTQTLKFPLSSLDGFVSEASNFLLLRIMARQKIVPENMTFLSLDADSGLSKSVYKALGWQKQMVGEDLVDIFGIERTIYSANLSSATWHCFFMPDGHLASRVQLGSPAVMKLLHLPFLLDGVIKTFFFLVEKDKIPVMEKKPLIWEEDMELYSKFLDRKEELKADYSSYLRQHPELKALLADFLQFLLLRKPQDVFSFARDFFAPFASQSPPGKSQEF</sequence>
<reference key="1">
    <citation type="submission" date="2006-09" db="EMBL/GenBank/DDBJ databases">
        <authorList>
            <consortium name="NIH - Zebrafish Gene Collection (ZGC) project"/>
        </authorList>
    </citation>
    <scope>NUCLEOTIDE SEQUENCE [LARGE SCALE MRNA]</scope>
    <source>
        <tissue>Olfactory epithelium</tissue>
    </source>
</reference>
<reference key="2">
    <citation type="journal article" date="2014" name="PLoS ONE">
        <title>C2orf62 and TTC17 Are Involved in Actin Organization and Ciliogenesis in Zebrafish and Human.</title>
        <authorList>
            <person name="Bontems F."/>
            <person name="Fish R.J."/>
            <person name="Borlat I."/>
            <person name="Lembo F."/>
            <person name="Chocu S."/>
            <person name="Chalmel F."/>
            <person name="Borg J.P."/>
            <person name="Pineau C."/>
            <person name="Neerman-Arbez M."/>
            <person name="Bairoch A."/>
            <person name="Lane L."/>
        </authorList>
    </citation>
    <scope>FUNCTION</scope>
    <scope>DISRUPTION PHENOTYPE</scope>
    <scope>TISSUE SPECIFICITY</scope>
    <scope>DEVELOPMENTAL STAGE</scope>
</reference>
<feature type="chain" id="PRO_0000360989" description="Ciliogenesis-associated TTC17-interacting protein">
    <location>
        <begin position="1"/>
        <end position="356"/>
    </location>
</feature>
<organism>
    <name type="scientific">Danio rerio</name>
    <name type="common">Zebrafish</name>
    <name type="synonym">Brachydanio rerio</name>
    <dbReference type="NCBI Taxonomy" id="7955"/>
    <lineage>
        <taxon>Eukaryota</taxon>
        <taxon>Metazoa</taxon>
        <taxon>Chordata</taxon>
        <taxon>Craniata</taxon>
        <taxon>Vertebrata</taxon>
        <taxon>Euteleostomi</taxon>
        <taxon>Actinopterygii</taxon>
        <taxon>Neopterygii</taxon>
        <taxon>Teleostei</taxon>
        <taxon>Ostariophysi</taxon>
        <taxon>Cypriniformes</taxon>
        <taxon>Danionidae</taxon>
        <taxon>Danioninae</taxon>
        <taxon>Danio</taxon>
    </lineage>
</organism>
<gene>
    <name type="primary">catip</name>
    <name type="ORF">zgc:153063</name>
</gene>
<comment type="function">
    <text evidence="2">Plays a role in primary ciliogenesis by modulating actin polymerization.</text>
</comment>
<comment type="subcellular location">
    <subcellularLocation>
        <location evidence="1">Nucleus</location>
    </subcellularLocation>
    <subcellularLocation>
        <location evidence="1">Cytoplasm</location>
    </subcellularLocation>
    <subcellularLocation>
        <location evidence="1">Cell membrane</location>
    </subcellularLocation>
    <subcellularLocation>
        <location evidence="1">Cytoplasm</location>
        <location evidence="1">Cytoskeleton</location>
    </subcellularLocation>
</comment>
<comment type="tissue specificity">
    <text evidence="2">Expressed in tissues rich in motile cilia.</text>
</comment>
<comment type="developmental stage">
    <text evidence="2">Expressed in Kupffer's vesicle at 12 hours post fertilization (hpf). Expressed in brain, neural tube, pronephric ducts, olfactory placode and the eye at 28 hpf. Expressed in ciliated cells of the olfactory placode, ear, neuromasts and pronephric ducts at 48 hpf. Expressed in neuromasts, olfactory sensory neurons and in the ear at 96 hpf (at protein level).</text>
</comment>
<comment type="disruption phenotype">
    <text evidence="2">Morpholino knockdown of the protein causes curved body, a lack of defined brain structures or necrosis in the developing brain, and eye formation defects at 24 hpf. At 48 hpf, show a reduction in number of ciliated cells within the olfactory organ.</text>
</comment>
<comment type="similarity">
    <text evidence="3">Belongs to the CATIP family.</text>
</comment>
<proteinExistence type="evidence at protein level"/>
<keyword id="KW-1003">Cell membrane</keyword>
<keyword id="KW-0970">Cilium biogenesis/degradation</keyword>
<keyword id="KW-0963">Cytoplasm</keyword>
<keyword id="KW-0206">Cytoskeleton</keyword>
<keyword id="KW-0472">Membrane</keyword>
<keyword id="KW-0539">Nucleus</keyword>
<keyword id="KW-1185">Reference proteome</keyword>
<name>CATIP_DANRE</name>
<protein>
    <recommendedName>
        <fullName>Ciliogenesis-associated TTC17-interacting protein</fullName>
    </recommendedName>
</protein>
<dbReference type="EMBL" id="BC124235">
    <property type="protein sequence ID" value="AAI24236.1"/>
    <property type="molecule type" value="mRNA"/>
</dbReference>
<dbReference type="RefSeq" id="NP_001070238.1">
    <property type="nucleotide sequence ID" value="NM_001076770.1"/>
</dbReference>
<dbReference type="SMR" id="Q08CH6"/>
<dbReference type="FunCoup" id="Q08CH6">
    <property type="interactions" value="1368"/>
</dbReference>
<dbReference type="STRING" id="7955.ENSDARP00000086133"/>
<dbReference type="PaxDb" id="7955-ENSDARP00000086133"/>
<dbReference type="Ensembl" id="ENSDART00000091700">
    <property type="protein sequence ID" value="ENSDARP00000086133"/>
    <property type="gene ID" value="ENSDARG00000063009"/>
</dbReference>
<dbReference type="GeneID" id="767803"/>
<dbReference type="KEGG" id="dre:767803"/>
<dbReference type="AGR" id="ZFIN:ZDB-GENE-060929-1170"/>
<dbReference type="CTD" id="375307"/>
<dbReference type="ZFIN" id="ZDB-GENE-060929-1170">
    <property type="gene designation" value="catip"/>
</dbReference>
<dbReference type="eggNOG" id="ENOG502QPJE">
    <property type="taxonomic scope" value="Eukaryota"/>
</dbReference>
<dbReference type="HOGENOM" id="CLU_041155_0_0_1"/>
<dbReference type="InParanoid" id="Q08CH6"/>
<dbReference type="OMA" id="SPGCCMI"/>
<dbReference type="OrthoDB" id="6334211at2759"/>
<dbReference type="PhylomeDB" id="Q08CH6"/>
<dbReference type="TreeFam" id="TF328954"/>
<dbReference type="PRO" id="PR:Q08CH6"/>
<dbReference type="Proteomes" id="UP000000437">
    <property type="component" value="Chromosome 6"/>
</dbReference>
<dbReference type="Bgee" id="ENSDARG00000063009">
    <property type="expression patterns" value="Expressed in testis and 14 other cell types or tissues"/>
</dbReference>
<dbReference type="ExpressionAtlas" id="Q08CH6">
    <property type="expression patterns" value="baseline and differential"/>
</dbReference>
<dbReference type="GO" id="GO:0015629">
    <property type="term" value="C:actin cytoskeleton"/>
    <property type="evidence" value="ECO:0000250"/>
    <property type="project" value="UniProtKB"/>
</dbReference>
<dbReference type="GO" id="GO:0005737">
    <property type="term" value="C:cytoplasm"/>
    <property type="evidence" value="ECO:0000250"/>
    <property type="project" value="UniProtKB"/>
</dbReference>
<dbReference type="GO" id="GO:0005634">
    <property type="term" value="C:nucleus"/>
    <property type="evidence" value="ECO:0000250"/>
    <property type="project" value="UniProtKB"/>
</dbReference>
<dbReference type="GO" id="GO:0005886">
    <property type="term" value="C:plasma membrane"/>
    <property type="evidence" value="ECO:0000250"/>
    <property type="project" value="UniProtKB"/>
</dbReference>
<dbReference type="GO" id="GO:0030041">
    <property type="term" value="P:actin filament polymerization"/>
    <property type="evidence" value="ECO:0000315"/>
    <property type="project" value="UniProtKB"/>
</dbReference>
<dbReference type="GO" id="GO:0060271">
    <property type="term" value="P:cilium assembly"/>
    <property type="evidence" value="ECO:0000315"/>
    <property type="project" value="ZFIN"/>
</dbReference>
<dbReference type="GO" id="GO:0044782">
    <property type="term" value="P:cilium organization"/>
    <property type="evidence" value="ECO:0000315"/>
    <property type="project" value="UniProtKB"/>
</dbReference>
<dbReference type="GO" id="GO:0061371">
    <property type="term" value="P:determination of heart left/right asymmetry"/>
    <property type="evidence" value="ECO:0000315"/>
    <property type="project" value="ZFIN"/>
</dbReference>
<dbReference type="CDD" id="cd22973">
    <property type="entry name" value="DD_CATIP"/>
    <property type="match status" value="1"/>
</dbReference>
<dbReference type="InterPro" id="IPR048777">
    <property type="entry name" value="CATIP_N"/>
</dbReference>
<dbReference type="InterPro" id="IPR047501">
    <property type="entry name" value="DD_CATIP"/>
</dbReference>
<dbReference type="PANTHER" id="PTHR15505:SF3">
    <property type="entry name" value="CILIOGENESIS-ASSOCIATED TTC17-INTERACTING PROTEIN"/>
    <property type="match status" value="1"/>
</dbReference>
<dbReference type="PANTHER" id="PTHR15505">
    <property type="entry name" value="RIIA DOMAIN-CONTAINING PROTEIN 1"/>
    <property type="match status" value="1"/>
</dbReference>
<dbReference type="Pfam" id="PF21772">
    <property type="entry name" value="CATIP_N"/>
    <property type="match status" value="1"/>
</dbReference>
<dbReference type="SUPFAM" id="SSF47391">
    <property type="entry name" value="Dimerization-anchoring domain of cAMP-dependent PK regulatory subunit"/>
    <property type="match status" value="1"/>
</dbReference>